<comment type="function">
    <text evidence="1">Mediates visceral muscle contractile activity (myotropic activity).</text>
</comment>
<comment type="subcellular location">
    <subcellularLocation>
        <location evidence="4">Secreted</location>
    </subcellularLocation>
</comment>
<comment type="mass spectrometry" mass="1447.7" method="MALDI" evidence="3"/>
<comment type="similarity">
    <text evidence="2">Belongs to the pyrokinin family.</text>
</comment>
<dbReference type="GO" id="GO:0005576">
    <property type="term" value="C:extracellular region"/>
    <property type="evidence" value="ECO:0007669"/>
    <property type="project" value="UniProtKB-SubCell"/>
</dbReference>
<dbReference type="GO" id="GO:0007218">
    <property type="term" value="P:neuropeptide signaling pathway"/>
    <property type="evidence" value="ECO:0007669"/>
    <property type="project" value="UniProtKB-KW"/>
</dbReference>
<proteinExistence type="evidence at protein level"/>
<organism>
    <name type="scientific">Periplaneta australasiae</name>
    <name type="common">Australian cockroach</name>
    <name type="synonym">Blatta australasiae</name>
    <dbReference type="NCBI Taxonomy" id="36975"/>
    <lineage>
        <taxon>Eukaryota</taxon>
        <taxon>Metazoa</taxon>
        <taxon>Ecdysozoa</taxon>
        <taxon>Arthropoda</taxon>
        <taxon>Hexapoda</taxon>
        <taxon>Insecta</taxon>
        <taxon>Pterygota</taxon>
        <taxon>Neoptera</taxon>
        <taxon>Polyneoptera</taxon>
        <taxon>Dictyoptera</taxon>
        <taxon>Blattodea</taxon>
        <taxon>Blattoidea</taxon>
        <taxon>Blattidae</taxon>
        <taxon>Blattinae</taxon>
        <taxon>Periplaneta</taxon>
    </lineage>
</organism>
<keyword id="KW-0027">Amidation</keyword>
<keyword id="KW-0903">Direct protein sequencing</keyword>
<keyword id="KW-0527">Neuropeptide</keyword>
<keyword id="KW-0964">Secreted</keyword>
<evidence type="ECO:0000250" key="1">
    <source>
        <dbReference type="UniProtKB" id="P82619"/>
    </source>
</evidence>
<evidence type="ECO:0000255" key="2"/>
<evidence type="ECO:0000269" key="3">
    <source>
    </source>
</evidence>
<evidence type="ECO:0000305" key="4"/>
<accession>P84409</accession>
<protein>
    <recommendedName>
        <fullName>Pyrokinin-4</fullName>
    </recommendedName>
    <alternativeName>
        <fullName>YXPRL-amide</fullName>
    </alternativeName>
</protein>
<feature type="peptide" id="PRO_0000044333" description="Pyrokinin-4">
    <location>
        <begin position="1"/>
        <end position="12"/>
    </location>
</feature>
<feature type="modified residue" description="Leucine amide" evidence="3">
    <location>
        <position position="12"/>
    </location>
</feature>
<name>PPK4_PERAU</name>
<reference evidence="4" key="1">
    <citation type="journal article" date="2005" name="Peptides">
        <title>Peptidomics of neurohemal organs from species of the cockroach family Blattidae: how do neuropeptides of closely related species differ?</title>
        <authorList>
            <person name="Predel R."/>
            <person name="Gaede G."/>
        </authorList>
    </citation>
    <scope>PROTEIN SEQUENCE</scope>
    <scope>MASS SPECTROMETRY</scope>
    <scope>AMIDATION AT LEU-12</scope>
    <source>
        <tissue evidence="3">Corpora allata</tissue>
    </source>
</reference>
<sequence length="12" mass="1449">DHLPHDVYSPRL</sequence>